<evidence type="ECO:0000255" key="1">
    <source>
        <dbReference type="HAMAP-Rule" id="MF_00636"/>
    </source>
</evidence>
<organism>
    <name type="scientific">Leptothrix cholodnii (strain ATCC 51168 / LMG 8142 / SP-6)</name>
    <name type="common">Leptothrix discophora (strain SP-6)</name>
    <dbReference type="NCBI Taxonomy" id="395495"/>
    <lineage>
        <taxon>Bacteria</taxon>
        <taxon>Pseudomonadati</taxon>
        <taxon>Pseudomonadota</taxon>
        <taxon>Betaproteobacteria</taxon>
        <taxon>Burkholderiales</taxon>
        <taxon>Sphaerotilaceae</taxon>
        <taxon>Leptothrix</taxon>
    </lineage>
</organism>
<protein>
    <recommendedName>
        <fullName evidence="1">Nucleotide-binding protein Lcho_3490</fullName>
    </recommendedName>
</protein>
<reference key="1">
    <citation type="submission" date="2008-03" db="EMBL/GenBank/DDBJ databases">
        <title>Complete sequence of Leptothrix cholodnii SP-6.</title>
        <authorList>
            <consortium name="US DOE Joint Genome Institute"/>
            <person name="Copeland A."/>
            <person name="Lucas S."/>
            <person name="Lapidus A."/>
            <person name="Glavina del Rio T."/>
            <person name="Dalin E."/>
            <person name="Tice H."/>
            <person name="Bruce D."/>
            <person name="Goodwin L."/>
            <person name="Pitluck S."/>
            <person name="Chertkov O."/>
            <person name="Brettin T."/>
            <person name="Detter J.C."/>
            <person name="Han C."/>
            <person name="Kuske C.R."/>
            <person name="Schmutz J."/>
            <person name="Larimer F."/>
            <person name="Land M."/>
            <person name="Hauser L."/>
            <person name="Kyrpides N."/>
            <person name="Lykidis A."/>
            <person name="Emerson D."/>
            <person name="Richardson P."/>
        </authorList>
    </citation>
    <scope>NUCLEOTIDE SEQUENCE [LARGE SCALE GENOMIC DNA]</scope>
    <source>
        <strain>ATCC 51168 / LMG 8142 / SP-6</strain>
    </source>
</reference>
<name>Y3490_LEPCP</name>
<dbReference type="EMBL" id="CP001013">
    <property type="protein sequence ID" value="ACB35744.1"/>
    <property type="molecule type" value="Genomic_DNA"/>
</dbReference>
<dbReference type="SMR" id="B1Y3P1"/>
<dbReference type="STRING" id="395495.Lcho_3490"/>
<dbReference type="KEGG" id="lch:Lcho_3490"/>
<dbReference type="eggNOG" id="COG1660">
    <property type="taxonomic scope" value="Bacteria"/>
</dbReference>
<dbReference type="HOGENOM" id="CLU_059558_1_1_4"/>
<dbReference type="Proteomes" id="UP000001693">
    <property type="component" value="Chromosome"/>
</dbReference>
<dbReference type="GO" id="GO:0005524">
    <property type="term" value="F:ATP binding"/>
    <property type="evidence" value="ECO:0007669"/>
    <property type="project" value="UniProtKB-UniRule"/>
</dbReference>
<dbReference type="GO" id="GO:0005525">
    <property type="term" value="F:GTP binding"/>
    <property type="evidence" value="ECO:0007669"/>
    <property type="project" value="UniProtKB-UniRule"/>
</dbReference>
<dbReference type="HAMAP" id="MF_00636">
    <property type="entry name" value="RapZ_like"/>
    <property type="match status" value="1"/>
</dbReference>
<dbReference type="InterPro" id="IPR027417">
    <property type="entry name" value="P-loop_NTPase"/>
</dbReference>
<dbReference type="InterPro" id="IPR005337">
    <property type="entry name" value="RapZ-like"/>
</dbReference>
<dbReference type="InterPro" id="IPR053930">
    <property type="entry name" value="RapZ-like_N"/>
</dbReference>
<dbReference type="InterPro" id="IPR053931">
    <property type="entry name" value="RapZ_C"/>
</dbReference>
<dbReference type="NCBIfam" id="NF003828">
    <property type="entry name" value="PRK05416.1"/>
    <property type="match status" value="1"/>
</dbReference>
<dbReference type="PANTHER" id="PTHR30448">
    <property type="entry name" value="RNASE ADAPTER PROTEIN RAPZ"/>
    <property type="match status" value="1"/>
</dbReference>
<dbReference type="PANTHER" id="PTHR30448:SF0">
    <property type="entry name" value="RNASE ADAPTER PROTEIN RAPZ"/>
    <property type="match status" value="1"/>
</dbReference>
<dbReference type="Pfam" id="PF22740">
    <property type="entry name" value="PapZ_C"/>
    <property type="match status" value="1"/>
</dbReference>
<dbReference type="Pfam" id="PF03668">
    <property type="entry name" value="RapZ-like_N"/>
    <property type="match status" value="1"/>
</dbReference>
<dbReference type="PIRSF" id="PIRSF005052">
    <property type="entry name" value="P-loopkin"/>
    <property type="match status" value="1"/>
</dbReference>
<dbReference type="SUPFAM" id="SSF52540">
    <property type="entry name" value="P-loop containing nucleoside triphosphate hydrolases"/>
    <property type="match status" value="1"/>
</dbReference>
<feature type="chain" id="PRO_0000383259" description="Nucleotide-binding protein Lcho_3490">
    <location>
        <begin position="1"/>
        <end position="318"/>
    </location>
</feature>
<feature type="binding site" evidence="1">
    <location>
        <begin position="35"/>
        <end position="42"/>
    </location>
    <ligand>
        <name>ATP</name>
        <dbReference type="ChEBI" id="CHEBI:30616"/>
    </ligand>
</feature>
<feature type="binding site" evidence="1">
    <location>
        <begin position="84"/>
        <end position="87"/>
    </location>
    <ligand>
        <name>GTP</name>
        <dbReference type="ChEBI" id="CHEBI:37565"/>
    </ligand>
</feature>
<gene>
    <name type="ordered locus">Lcho_3490</name>
</gene>
<proteinExistence type="inferred from homology"/>
<keyword id="KW-0067">ATP-binding</keyword>
<keyword id="KW-0342">GTP-binding</keyword>
<keyword id="KW-0547">Nucleotide-binding</keyword>
<keyword id="KW-1185">Reference proteome</keyword>
<accession>B1Y3P1</accession>
<comment type="function">
    <text evidence="1">Displays ATPase and GTPase activities.</text>
</comment>
<comment type="similarity">
    <text evidence="1">Belongs to the RapZ-like family.</text>
</comment>
<sequence length="318" mass="35491">MSSRPPYLPPIPTHVPGATAAELAALPEPVILISGISGGGKSVALNALEDAGYFCVDNLPPELLPEFIRLQRAQAVRKVAVAVDVRNAASLPKLLPLVDQLRREGTRILPMFLESRSDTLVRRFSETRRRHPLSSRQDDQGQTRSALIDAIEHERELLASLREVSTVIDTSDLRPAQLRTWVRQLVGAAHSSLTLVFESFAFKHGVPRDADLVFDLRVLPNPHYVRELRPLNGRDAGVIDFMHAQPEAAEMLAQIEGFLLRWLPSYAMDQRSYLTVALGCTGGQHRSVYGAEQLAQRFRERVPTLVRHREIEAREAVL</sequence>